<sequence length="110" mass="13581">MGQNDLVKTLRMNYLFDFYQSLLTNKQRNYLELFYLEDYSLSEIADTFNVSRQAVYDNIRRTGDLVEDYEKKLELYQKFEQRREIYDEMKQHLSNPEQIQRYIQQLEDLE</sequence>
<evidence type="ECO:0000255" key="1">
    <source>
        <dbReference type="HAMAP-Rule" id="MF_00245"/>
    </source>
</evidence>
<proteinExistence type="inferred from homology"/>
<accession>A7X1K4</accession>
<feature type="chain" id="PRO_1000012537" description="UPF0122 protein SAHV_1226">
    <location>
        <begin position="1"/>
        <end position="110"/>
    </location>
</feature>
<comment type="function">
    <text evidence="1">Might take part in the signal recognition particle (SRP) pathway. This is inferred from the conservation of its genetic proximity to ftsY/ffh. May be a regulatory protein.</text>
</comment>
<comment type="similarity">
    <text evidence="1">Belongs to the UPF0122 family.</text>
</comment>
<organism>
    <name type="scientific">Staphylococcus aureus (strain Mu3 / ATCC 700698)</name>
    <dbReference type="NCBI Taxonomy" id="418127"/>
    <lineage>
        <taxon>Bacteria</taxon>
        <taxon>Bacillati</taxon>
        <taxon>Bacillota</taxon>
        <taxon>Bacilli</taxon>
        <taxon>Bacillales</taxon>
        <taxon>Staphylococcaceae</taxon>
        <taxon>Staphylococcus</taxon>
    </lineage>
</organism>
<name>Y1226_STAA1</name>
<dbReference type="EMBL" id="AP009324">
    <property type="protein sequence ID" value="BAF78109.1"/>
    <property type="molecule type" value="Genomic_DNA"/>
</dbReference>
<dbReference type="RefSeq" id="WP_000531320.1">
    <property type="nucleotide sequence ID" value="NZ_CTYB01000004.1"/>
</dbReference>
<dbReference type="SMR" id="A7X1K4"/>
<dbReference type="KEGG" id="saw:SAHV_1226"/>
<dbReference type="HOGENOM" id="CLU_129218_1_1_9"/>
<dbReference type="Gene3D" id="1.10.10.10">
    <property type="entry name" value="Winged helix-like DNA-binding domain superfamily/Winged helix DNA-binding domain"/>
    <property type="match status" value="1"/>
</dbReference>
<dbReference type="HAMAP" id="MF_00245">
    <property type="entry name" value="UPF0122"/>
    <property type="match status" value="1"/>
</dbReference>
<dbReference type="InterPro" id="IPR013324">
    <property type="entry name" value="RNA_pol_sigma_r3/r4-like"/>
</dbReference>
<dbReference type="InterPro" id="IPR007394">
    <property type="entry name" value="UPF0122"/>
</dbReference>
<dbReference type="InterPro" id="IPR054831">
    <property type="entry name" value="UPF0122_fam_protein"/>
</dbReference>
<dbReference type="InterPro" id="IPR036388">
    <property type="entry name" value="WH-like_DNA-bd_sf"/>
</dbReference>
<dbReference type="NCBIfam" id="NF001067">
    <property type="entry name" value="PRK00118.1-2"/>
    <property type="match status" value="1"/>
</dbReference>
<dbReference type="NCBIfam" id="NF001070">
    <property type="entry name" value="PRK00118.1-6"/>
    <property type="match status" value="1"/>
</dbReference>
<dbReference type="NCBIfam" id="NF045758">
    <property type="entry name" value="YlxM"/>
    <property type="match status" value="1"/>
</dbReference>
<dbReference type="PANTHER" id="PTHR40083">
    <property type="entry name" value="UPF0122 PROTEIN CBO2450/CLC_2298"/>
    <property type="match status" value="1"/>
</dbReference>
<dbReference type="PANTHER" id="PTHR40083:SF1">
    <property type="entry name" value="UPF0122 PROTEIN YLXM"/>
    <property type="match status" value="1"/>
</dbReference>
<dbReference type="Pfam" id="PF04297">
    <property type="entry name" value="UPF0122"/>
    <property type="match status" value="1"/>
</dbReference>
<dbReference type="SUPFAM" id="SSF88659">
    <property type="entry name" value="Sigma3 and sigma4 domains of RNA polymerase sigma factors"/>
    <property type="match status" value="1"/>
</dbReference>
<gene>
    <name type="ordered locus">SAHV_1226</name>
</gene>
<protein>
    <recommendedName>
        <fullName evidence="1">UPF0122 protein SAHV_1226</fullName>
    </recommendedName>
</protein>
<reference key="1">
    <citation type="journal article" date="2008" name="Antimicrob. Agents Chemother.">
        <title>Mutated response regulator graR is responsible for phenotypic conversion of Staphylococcus aureus from heterogeneous vancomycin-intermediate resistance to vancomycin-intermediate resistance.</title>
        <authorList>
            <person name="Neoh H.-M."/>
            <person name="Cui L."/>
            <person name="Yuzawa H."/>
            <person name="Takeuchi F."/>
            <person name="Matsuo M."/>
            <person name="Hiramatsu K."/>
        </authorList>
    </citation>
    <scope>NUCLEOTIDE SEQUENCE [LARGE SCALE GENOMIC DNA]</scope>
    <source>
        <strain>Mu3 / ATCC 700698</strain>
    </source>
</reference>